<protein>
    <recommendedName>
        <fullName evidence="1">S-adenosylmethionine:tRNA ribosyltransferase-isomerase</fullName>
        <ecNumber evidence="1">2.4.99.17</ecNumber>
    </recommendedName>
    <alternativeName>
        <fullName evidence="1">Queuosine biosynthesis protein QueA</fullName>
    </alternativeName>
</protein>
<reference key="1">
    <citation type="submission" date="2005-08" db="EMBL/GenBank/DDBJ databases">
        <title>Complete sequence of chromosome 1 of Nitrosospira multiformis ATCC 25196.</title>
        <authorList>
            <person name="Copeland A."/>
            <person name="Lucas S."/>
            <person name="Lapidus A."/>
            <person name="Barry K."/>
            <person name="Detter J.C."/>
            <person name="Glavina T."/>
            <person name="Hammon N."/>
            <person name="Israni S."/>
            <person name="Pitluck S."/>
            <person name="Chain P."/>
            <person name="Malfatti S."/>
            <person name="Shin M."/>
            <person name="Vergez L."/>
            <person name="Schmutz J."/>
            <person name="Larimer F."/>
            <person name="Land M."/>
            <person name="Hauser L."/>
            <person name="Kyrpides N."/>
            <person name="Lykidis A."/>
            <person name="Richardson P."/>
        </authorList>
    </citation>
    <scope>NUCLEOTIDE SEQUENCE [LARGE SCALE GENOMIC DNA]</scope>
    <source>
        <strain>ATCC 25196 / NCIMB 11849 / C 71</strain>
    </source>
</reference>
<name>QUEA_NITMU</name>
<organism>
    <name type="scientific">Nitrosospira multiformis (strain ATCC 25196 / NCIMB 11849 / C 71)</name>
    <dbReference type="NCBI Taxonomy" id="323848"/>
    <lineage>
        <taxon>Bacteria</taxon>
        <taxon>Pseudomonadati</taxon>
        <taxon>Pseudomonadota</taxon>
        <taxon>Betaproteobacteria</taxon>
        <taxon>Nitrosomonadales</taxon>
        <taxon>Nitrosomonadaceae</taxon>
        <taxon>Nitrosospira</taxon>
    </lineage>
</organism>
<gene>
    <name evidence="1" type="primary">queA</name>
    <name type="ordered locus">Nmul_A2430</name>
</gene>
<accession>Q2Y6A2</accession>
<feature type="chain" id="PRO_0000231353" description="S-adenosylmethionine:tRNA ribosyltransferase-isomerase">
    <location>
        <begin position="1"/>
        <end position="356"/>
    </location>
</feature>
<dbReference type="EC" id="2.4.99.17" evidence="1"/>
<dbReference type="EMBL" id="CP000103">
    <property type="protein sequence ID" value="ABB75719.1"/>
    <property type="molecule type" value="Genomic_DNA"/>
</dbReference>
<dbReference type="RefSeq" id="WP_011381720.1">
    <property type="nucleotide sequence ID" value="NC_007614.1"/>
</dbReference>
<dbReference type="SMR" id="Q2Y6A2"/>
<dbReference type="STRING" id="323848.Nmul_A2430"/>
<dbReference type="KEGG" id="nmu:Nmul_A2430"/>
<dbReference type="eggNOG" id="COG0809">
    <property type="taxonomic scope" value="Bacteria"/>
</dbReference>
<dbReference type="HOGENOM" id="CLU_039110_1_0_4"/>
<dbReference type="OrthoDB" id="9805933at2"/>
<dbReference type="UniPathway" id="UPA00392"/>
<dbReference type="Proteomes" id="UP000002718">
    <property type="component" value="Chromosome"/>
</dbReference>
<dbReference type="GO" id="GO:0005737">
    <property type="term" value="C:cytoplasm"/>
    <property type="evidence" value="ECO:0007669"/>
    <property type="project" value="UniProtKB-SubCell"/>
</dbReference>
<dbReference type="GO" id="GO:0051075">
    <property type="term" value="F:S-adenosylmethionine:tRNA ribosyltransferase-isomerase activity"/>
    <property type="evidence" value="ECO:0007669"/>
    <property type="project" value="UniProtKB-EC"/>
</dbReference>
<dbReference type="GO" id="GO:0008616">
    <property type="term" value="P:queuosine biosynthetic process"/>
    <property type="evidence" value="ECO:0007669"/>
    <property type="project" value="UniProtKB-UniRule"/>
</dbReference>
<dbReference type="GO" id="GO:0002099">
    <property type="term" value="P:tRNA wobble guanine modification"/>
    <property type="evidence" value="ECO:0007669"/>
    <property type="project" value="TreeGrafter"/>
</dbReference>
<dbReference type="FunFam" id="3.40.1780.10:FF:000001">
    <property type="entry name" value="S-adenosylmethionine:tRNA ribosyltransferase-isomerase"/>
    <property type="match status" value="1"/>
</dbReference>
<dbReference type="Gene3D" id="2.40.10.240">
    <property type="entry name" value="QueA-like"/>
    <property type="match status" value="1"/>
</dbReference>
<dbReference type="Gene3D" id="3.40.1780.10">
    <property type="entry name" value="QueA-like"/>
    <property type="match status" value="2"/>
</dbReference>
<dbReference type="HAMAP" id="MF_00113">
    <property type="entry name" value="QueA"/>
    <property type="match status" value="1"/>
</dbReference>
<dbReference type="InterPro" id="IPR003699">
    <property type="entry name" value="QueA"/>
</dbReference>
<dbReference type="InterPro" id="IPR042118">
    <property type="entry name" value="QueA_dom1"/>
</dbReference>
<dbReference type="InterPro" id="IPR042119">
    <property type="entry name" value="QueA_dom2"/>
</dbReference>
<dbReference type="InterPro" id="IPR036100">
    <property type="entry name" value="QueA_sf"/>
</dbReference>
<dbReference type="NCBIfam" id="NF001140">
    <property type="entry name" value="PRK00147.1"/>
    <property type="match status" value="1"/>
</dbReference>
<dbReference type="NCBIfam" id="TIGR00113">
    <property type="entry name" value="queA"/>
    <property type="match status" value="1"/>
</dbReference>
<dbReference type="PANTHER" id="PTHR30307">
    <property type="entry name" value="S-ADENOSYLMETHIONINE:TRNA RIBOSYLTRANSFERASE-ISOMERASE"/>
    <property type="match status" value="1"/>
</dbReference>
<dbReference type="PANTHER" id="PTHR30307:SF0">
    <property type="entry name" value="S-ADENOSYLMETHIONINE:TRNA RIBOSYLTRANSFERASE-ISOMERASE"/>
    <property type="match status" value="1"/>
</dbReference>
<dbReference type="Pfam" id="PF02547">
    <property type="entry name" value="Queuosine_synth"/>
    <property type="match status" value="1"/>
</dbReference>
<dbReference type="SUPFAM" id="SSF111337">
    <property type="entry name" value="QueA-like"/>
    <property type="match status" value="1"/>
</dbReference>
<proteinExistence type="inferred from homology"/>
<sequence>MKIQDFDFDLPPELIAQFPAEKRGNSRMLHLDATSGALQDRMFADLPSYLRPGDVIVFNDTRVIKARLYGVRDTGGRVEVLVERVLDSHCALAAIRASHSPKPGSKLFLAGAIEVTVLSREHGFYILQFEHESGVMELLERYGNLPLPPYISRPVEKSDELRYQTVYAARPGAVAAPTAGLHFDEHMLGLLRKMGVVMAHVTLHVGSGTFQPVRVENIADHRMHSEVFYVSAETVECIRHAKAEGGRVLAVGTTSLRALEAAAAFAGERAEADNGDGVRIKCGAGETDIFITPGYQFRVVDCLLTNFHLPRSTLLMLVSAFGGVENIRCAYRHAIKERYRFFSFGDAMLIGRAEGI</sequence>
<comment type="function">
    <text evidence="1">Transfers and isomerizes the ribose moiety from AdoMet to the 7-aminomethyl group of 7-deazaguanine (preQ1-tRNA) to give epoxyqueuosine (oQ-tRNA).</text>
</comment>
<comment type="catalytic activity">
    <reaction evidence="1">
        <text>7-aminomethyl-7-carbaguanosine(34) in tRNA + S-adenosyl-L-methionine = epoxyqueuosine(34) in tRNA + adenine + L-methionine + 2 H(+)</text>
        <dbReference type="Rhea" id="RHEA:32155"/>
        <dbReference type="Rhea" id="RHEA-COMP:10342"/>
        <dbReference type="Rhea" id="RHEA-COMP:18582"/>
        <dbReference type="ChEBI" id="CHEBI:15378"/>
        <dbReference type="ChEBI" id="CHEBI:16708"/>
        <dbReference type="ChEBI" id="CHEBI:57844"/>
        <dbReference type="ChEBI" id="CHEBI:59789"/>
        <dbReference type="ChEBI" id="CHEBI:82833"/>
        <dbReference type="ChEBI" id="CHEBI:194443"/>
        <dbReference type="EC" id="2.4.99.17"/>
    </reaction>
</comment>
<comment type="pathway">
    <text evidence="1">tRNA modification; tRNA-queuosine biosynthesis.</text>
</comment>
<comment type="subunit">
    <text evidence="1">Monomer.</text>
</comment>
<comment type="subcellular location">
    <subcellularLocation>
        <location evidence="1">Cytoplasm</location>
    </subcellularLocation>
</comment>
<comment type="similarity">
    <text evidence="1">Belongs to the QueA family.</text>
</comment>
<keyword id="KW-0963">Cytoplasm</keyword>
<keyword id="KW-0671">Queuosine biosynthesis</keyword>
<keyword id="KW-1185">Reference proteome</keyword>
<keyword id="KW-0949">S-adenosyl-L-methionine</keyword>
<keyword id="KW-0808">Transferase</keyword>
<evidence type="ECO:0000255" key="1">
    <source>
        <dbReference type="HAMAP-Rule" id="MF_00113"/>
    </source>
</evidence>